<keyword id="KW-0150">Chloroplast</keyword>
<keyword id="KW-0539">Nucleus</keyword>
<keyword id="KW-0934">Plastid</keyword>
<keyword id="KW-1185">Reference proteome</keyword>
<keyword id="KW-0694">RNA-binding</keyword>
<keyword id="KW-0793">Thylakoid</keyword>
<keyword id="KW-0804">Transcription</keyword>
<keyword id="KW-0805">Transcription regulation</keyword>
<keyword id="KW-0809">Transit peptide</keyword>
<dbReference type="EMBL" id="AC007727">
    <property type="protein sequence ID" value="AAD41412.1"/>
    <property type="molecule type" value="Genomic_DNA"/>
</dbReference>
<dbReference type="EMBL" id="CP002684">
    <property type="protein sequence ID" value="AEE30122.1"/>
    <property type="molecule type" value="Genomic_DNA"/>
</dbReference>
<dbReference type="EMBL" id="CP002684">
    <property type="protein sequence ID" value="AEE30123.1"/>
    <property type="molecule type" value="Genomic_DNA"/>
</dbReference>
<dbReference type="EMBL" id="AF324715">
    <property type="protein sequence ID" value="AAG40066.1"/>
    <property type="molecule type" value="mRNA"/>
</dbReference>
<dbReference type="EMBL" id="AF326894">
    <property type="protein sequence ID" value="AAG41476.1"/>
    <property type="molecule type" value="mRNA"/>
</dbReference>
<dbReference type="EMBL" id="AF446886">
    <property type="protein sequence ID" value="AAL38619.1"/>
    <property type="molecule type" value="mRNA"/>
</dbReference>
<dbReference type="EMBL" id="AY052666">
    <property type="protein sequence ID" value="AAK96570.1"/>
    <property type="molecule type" value="mRNA"/>
</dbReference>
<dbReference type="EMBL" id="AY113873">
    <property type="protein sequence ID" value="AAM44921.1"/>
    <property type="molecule type" value="mRNA"/>
</dbReference>
<dbReference type="EMBL" id="AK317001">
    <property type="protein sequence ID" value="BAH19696.1"/>
    <property type="molecule type" value="mRNA"/>
</dbReference>
<dbReference type="PIR" id="H86348">
    <property type="entry name" value="H86348"/>
</dbReference>
<dbReference type="RefSeq" id="NP_001031076.1">
    <property type="nucleotide sequence ID" value="NM_001035999.3"/>
</dbReference>
<dbReference type="RefSeq" id="NP_564144.1">
    <property type="nucleotide sequence ID" value="NM_102009.3"/>
</dbReference>
<dbReference type="SMR" id="Q9XI19"/>
<dbReference type="FunCoup" id="Q9XI19">
    <property type="interactions" value="1478"/>
</dbReference>
<dbReference type="IntAct" id="Q9XI19">
    <property type="interactions" value="5"/>
</dbReference>
<dbReference type="MINT" id="Q9XI19"/>
<dbReference type="STRING" id="3702.Q9XI19"/>
<dbReference type="GlyGen" id="Q9XI19">
    <property type="glycosylation" value="1 site"/>
</dbReference>
<dbReference type="PaxDb" id="3702-AT1G21600.1"/>
<dbReference type="ProteomicsDB" id="177345"/>
<dbReference type="EnsemblPlants" id="AT1G21600.1">
    <property type="protein sequence ID" value="AT1G21600.1"/>
    <property type="gene ID" value="AT1G21600"/>
</dbReference>
<dbReference type="EnsemblPlants" id="AT1G21600.2">
    <property type="protein sequence ID" value="AT1G21600.2"/>
    <property type="gene ID" value="AT1G21600"/>
</dbReference>
<dbReference type="GeneID" id="838761"/>
<dbReference type="Gramene" id="AT1G21600.1">
    <property type="protein sequence ID" value="AT1G21600.1"/>
    <property type="gene ID" value="AT1G21600"/>
</dbReference>
<dbReference type="Gramene" id="AT1G21600.2">
    <property type="protein sequence ID" value="AT1G21600.2"/>
    <property type="gene ID" value="AT1G21600"/>
</dbReference>
<dbReference type="KEGG" id="ath:AT1G21600"/>
<dbReference type="Araport" id="AT1G21600"/>
<dbReference type="TAIR" id="AT1G21600">
    <property type="gene designation" value="PTAC6"/>
</dbReference>
<dbReference type="eggNOG" id="ENOG502QWJH">
    <property type="taxonomic scope" value="Eukaryota"/>
</dbReference>
<dbReference type="HOGENOM" id="CLU_060207_0_0_1"/>
<dbReference type="InParanoid" id="Q9XI19"/>
<dbReference type="OMA" id="IFLTKHY"/>
<dbReference type="OrthoDB" id="781981at2759"/>
<dbReference type="PhylomeDB" id="Q9XI19"/>
<dbReference type="PRO" id="PR:Q9XI19"/>
<dbReference type="Proteomes" id="UP000006548">
    <property type="component" value="Chromosome 1"/>
</dbReference>
<dbReference type="ExpressionAtlas" id="Q9XI19">
    <property type="expression patterns" value="baseline and differential"/>
</dbReference>
<dbReference type="GO" id="GO:0009507">
    <property type="term" value="C:chloroplast"/>
    <property type="evidence" value="ECO:0000314"/>
    <property type="project" value="UniProtKB"/>
</dbReference>
<dbReference type="GO" id="GO:0042644">
    <property type="term" value="C:chloroplast nucleoid"/>
    <property type="evidence" value="ECO:0007005"/>
    <property type="project" value="TAIR"/>
</dbReference>
<dbReference type="GO" id="GO:0009534">
    <property type="term" value="C:chloroplast thylakoid"/>
    <property type="evidence" value="ECO:0000314"/>
    <property type="project" value="UniProtKB"/>
</dbReference>
<dbReference type="GO" id="GO:0005737">
    <property type="term" value="C:cytoplasm"/>
    <property type="evidence" value="ECO:0000314"/>
    <property type="project" value="UniProtKB"/>
</dbReference>
<dbReference type="GO" id="GO:0005654">
    <property type="term" value="C:nucleoplasm"/>
    <property type="evidence" value="ECO:0000314"/>
    <property type="project" value="UniProtKB"/>
</dbReference>
<dbReference type="GO" id="GO:0005634">
    <property type="term" value="C:nucleus"/>
    <property type="evidence" value="ECO:0000314"/>
    <property type="project" value="UniProtKB"/>
</dbReference>
<dbReference type="GO" id="GO:0000427">
    <property type="term" value="C:plastid-encoded plastid RNA polymerase complex"/>
    <property type="evidence" value="ECO:0000314"/>
    <property type="project" value="UniProtKB"/>
</dbReference>
<dbReference type="GO" id="GO:0003723">
    <property type="term" value="F:RNA binding"/>
    <property type="evidence" value="ECO:0000314"/>
    <property type="project" value="UniProtKB"/>
</dbReference>
<dbReference type="GO" id="GO:0009658">
    <property type="term" value="P:chloroplast organization"/>
    <property type="evidence" value="ECO:0000315"/>
    <property type="project" value="UniProtKB"/>
</dbReference>
<dbReference type="GO" id="GO:0042793">
    <property type="term" value="P:plastid transcription"/>
    <property type="evidence" value="ECO:0000314"/>
    <property type="project" value="UniProtKB"/>
</dbReference>
<dbReference type="GO" id="GO:0045893">
    <property type="term" value="P:positive regulation of DNA-templated transcription"/>
    <property type="evidence" value="ECO:0000315"/>
    <property type="project" value="TAIR"/>
</dbReference>
<dbReference type="GO" id="GO:0010017">
    <property type="term" value="P:red or far-red light signaling pathway"/>
    <property type="evidence" value="ECO:0000315"/>
    <property type="project" value="UniProtKB"/>
</dbReference>
<dbReference type="GO" id="GO:0006355">
    <property type="term" value="P:regulation of DNA-templated transcription"/>
    <property type="evidence" value="ECO:0000314"/>
    <property type="project" value="UniProtKB"/>
</dbReference>
<dbReference type="GO" id="GO:0009735">
    <property type="term" value="P:response to cytokinin"/>
    <property type="evidence" value="ECO:0000270"/>
    <property type="project" value="UniProtKB"/>
</dbReference>
<dbReference type="GO" id="GO:0009416">
    <property type="term" value="P:response to light stimulus"/>
    <property type="evidence" value="ECO:0000314"/>
    <property type="project" value="UniProtKB"/>
</dbReference>
<dbReference type="InterPro" id="IPR044710">
    <property type="entry name" value="PTAC6"/>
</dbReference>
<dbReference type="PANTHER" id="PTHR35994">
    <property type="entry name" value="EXPRESSED PROTEIN"/>
    <property type="match status" value="1"/>
</dbReference>
<dbReference type="PANTHER" id="PTHR35994:SF1">
    <property type="entry name" value="PLASTID TRANSCRIPTIONALLY ACTIVE PROTEIN 6, CHLOROPLASTIC"/>
    <property type="match status" value="1"/>
</dbReference>
<accession>Q9XI19</accession>
<feature type="transit peptide" description="Chloroplast" evidence="5">
    <location>
        <begin position="1"/>
        <end position="59"/>
    </location>
</feature>
<feature type="chain" id="PRO_0000449048" description="PLASTID TRANSCRIPTIONALLY ACTIVE protein 6, chloroplastic">
    <location>
        <begin position="60"/>
        <end position="328"/>
    </location>
</feature>
<feature type="region of interest" description="Disordered" evidence="1">
    <location>
        <begin position="1"/>
        <end position="21"/>
    </location>
</feature>
<feature type="short sequence motif" description="Nuclear localization signal" evidence="12 13">
    <location>
        <begin position="267"/>
        <end position="275"/>
    </location>
</feature>
<feature type="short sequence motif" description="RNA binding domain" evidence="13">
    <location>
        <begin position="301"/>
        <end position="319"/>
    </location>
</feature>
<feature type="compositionally biased region" description="Low complexity" evidence="1">
    <location>
        <begin position="1"/>
        <end position="14"/>
    </location>
</feature>
<feature type="mutagenesis site" description="Albino phenotype and altered chloroplastic subcellular localization." evidence="7">
    <location>
        <begin position="1"/>
        <end position="59"/>
    </location>
</feature>
<feature type="mutagenesis site" description="Lost nuclear subcellular localization." evidence="5">
    <location>
        <begin position="265"/>
        <end position="288"/>
    </location>
</feature>
<feature type="mutagenesis site" description="Albino phenotype and altered nuclear subcellular localization." evidence="7">
    <original>RKRDRK</original>
    <variation>GGGDGG</variation>
    <location>
        <begin position="267"/>
        <end position="272"/>
    </location>
</feature>
<protein>
    <recommendedName>
        <fullName evidence="8">PLASTID TRANSCRIPTIONALLY ACTIVE protein 6, chloroplastic</fullName>
        <shortName evidence="8">pTAC6</shortName>
    </recommendedName>
    <alternativeName>
        <fullName evidence="9">Plastid-encoded RNA polymerase-associated protein 8</fullName>
        <shortName evidence="9">PEP-associated protein 8</shortName>
    </alternativeName>
</protein>
<name>PTAC6_ARATH</name>
<evidence type="ECO:0000256" key="1">
    <source>
        <dbReference type="SAM" id="MobiDB-lite"/>
    </source>
</evidence>
<evidence type="ECO:0000269" key="2">
    <source>
    </source>
</evidence>
<evidence type="ECO:0000269" key="3">
    <source>
    </source>
</evidence>
<evidence type="ECO:0000269" key="4">
    <source>
    </source>
</evidence>
<evidence type="ECO:0000269" key="5">
    <source>
    </source>
</evidence>
<evidence type="ECO:0000269" key="6">
    <source>
    </source>
</evidence>
<evidence type="ECO:0000269" key="7">
    <source>
    </source>
</evidence>
<evidence type="ECO:0000303" key="8">
    <source>
    </source>
</evidence>
<evidence type="ECO:0000303" key="9">
    <source>
    </source>
</evidence>
<evidence type="ECO:0000305" key="10">
    <source>
    </source>
</evidence>
<evidence type="ECO:0000305" key="11">
    <source>
    </source>
</evidence>
<evidence type="ECO:0000305" key="12">
    <source>
    </source>
</evidence>
<evidence type="ECO:0000305" key="13">
    <source>
    </source>
</evidence>
<evidence type="ECO:0000312" key="14">
    <source>
        <dbReference type="Araport" id="AT1G21600"/>
    </source>
</evidence>
<evidence type="ECO:0000312" key="15">
    <source>
        <dbReference type="EMBL" id="AAD41412.1"/>
    </source>
</evidence>
<organism>
    <name type="scientific">Arabidopsis thaliana</name>
    <name type="common">Mouse-ear cress</name>
    <dbReference type="NCBI Taxonomy" id="3702"/>
    <lineage>
        <taxon>Eukaryota</taxon>
        <taxon>Viridiplantae</taxon>
        <taxon>Streptophyta</taxon>
        <taxon>Embryophyta</taxon>
        <taxon>Tracheophyta</taxon>
        <taxon>Spermatophyta</taxon>
        <taxon>Magnoliopsida</taxon>
        <taxon>eudicotyledons</taxon>
        <taxon>Gunneridae</taxon>
        <taxon>Pentapetalae</taxon>
        <taxon>rosids</taxon>
        <taxon>malvids</taxon>
        <taxon>Brassicales</taxon>
        <taxon>Brassicaceae</taxon>
        <taxon>Camelineae</taxon>
        <taxon>Arabidopsis</taxon>
    </lineage>
</organism>
<sequence length="328" mass="37377">MASSAASPSLSLLSFTSKPPYPSGSQRLFASFRTDGLFAPLTLKSRRGRGIVVKVDDVDADGGGADEYDMDDEEVEEVDNKKDYDVEYDPLAAAIAAAGGGGDGDIAFVQSKSFISTQGWDSDMVVDYRINEDEFHKLSLMDCDFFIRKPPDPDNDVYDFREMYVTPPDTDIYSIPRVLAPMPQKYIRCAMSDYGCYNVTEPPIDAPRDPLYKSEREISKVFLTKHYRNRRTNDPEFVLDLEEIYVIDSKTKSITRARVLVTVPGGRKRDRKDDLLVIRDNGTSFKIIHVGERDDPTTVIEREEWTKTREDMEKHLRKLRDFSVSNWF</sequence>
<reference key="1">
    <citation type="journal article" date="2000" name="Nature">
        <title>Sequence and analysis of chromosome 1 of the plant Arabidopsis thaliana.</title>
        <authorList>
            <person name="Theologis A."/>
            <person name="Ecker J.R."/>
            <person name="Palm C.J."/>
            <person name="Federspiel N.A."/>
            <person name="Kaul S."/>
            <person name="White O."/>
            <person name="Alonso J."/>
            <person name="Altafi H."/>
            <person name="Araujo R."/>
            <person name="Bowman C.L."/>
            <person name="Brooks S.Y."/>
            <person name="Buehler E."/>
            <person name="Chan A."/>
            <person name="Chao Q."/>
            <person name="Chen H."/>
            <person name="Cheuk R.F."/>
            <person name="Chin C.W."/>
            <person name="Chung M.K."/>
            <person name="Conn L."/>
            <person name="Conway A.B."/>
            <person name="Conway A.R."/>
            <person name="Creasy T.H."/>
            <person name="Dewar K."/>
            <person name="Dunn P."/>
            <person name="Etgu P."/>
            <person name="Feldblyum T.V."/>
            <person name="Feng J.-D."/>
            <person name="Fong B."/>
            <person name="Fujii C.Y."/>
            <person name="Gill J.E."/>
            <person name="Goldsmith A.D."/>
            <person name="Haas B."/>
            <person name="Hansen N.F."/>
            <person name="Hughes B."/>
            <person name="Huizar L."/>
            <person name="Hunter J.L."/>
            <person name="Jenkins J."/>
            <person name="Johnson-Hopson C."/>
            <person name="Khan S."/>
            <person name="Khaykin E."/>
            <person name="Kim C.J."/>
            <person name="Koo H.L."/>
            <person name="Kremenetskaia I."/>
            <person name="Kurtz D.B."/>
            <person name="Kwan A."/>
            <person name="Lam B."/>
            <person name="Langin-Hooper S."/>
            <person name="Lee A."/>
            <person name="Lee J.M."/>
            <person name="Lenz C.A."/>
            <person name="Li J.H."/>
            <person name="Li Y.-P."/>
            <person name="Lin X."/>
            <person name="Liu S.X."/>
            <person name="Liu Z.A."/>
            <person name="Luros J.S."/>
            <person name="Maiti R."/>
            <person name="Marziali A."/>
            <person name="Militscher J."/>
            <person name="Miranda M."/>
            <person name="Nguyen M."/>
            <person name="Nierman W.C."/>
            <person name="Osborne B.I."/>
            <person name="Pai G."/>
            <person name="Peterson J."/>
            <person name="Pham P.K."/>
            <person name="Rizzo M."/>
            <person name="Rooney T."/>
            <person name="Rowley D."/>
            <person name="Sakano H."/>
            <person name="Salzberg S.L."/>
            <person name="Schwartz J.R."/>
            <person name="Shinn P."/>
            <person name="Southwick A.M."/>
            <person name="Sun H."/>
            <person name="Tallon L.J."/>
            <person name="Tambunga G."/>
            <person name="Toriumi M.J."/>
            <person name="Town C.D."/>
            <person name="Utterback T."/>
            <person name="Van Aken S."/>
            <person name="Vaysberg M."/>
            <person name="Vysotskaia V.S."/>
            <person name="Walker M."/>
            <person name="Wu D."/>
            <person name="Yu G."/>
            <person name="Fraser C.M."/>
            <person name="Venter J.C."/>
            <person name="Davis R.W."/>
        </authorList>
    </citation>
    <scope>NUCLEOTIDE SEQUENCE [LARGE SCALE GENOMIC DNA]</scope>
    <source>
        <strain>cv. Columbia</strain>
    </source>
</reference>
<reference key="2">
    <citation type="journal article" date="2017" name="Plant J.">
        <title>Araport11: a complete reannotation of the Arabidopsis thaliana reference genome.</title>
        <authorList>
            <person name="Cheng C.Y."/>
            <person name="Krishnakumar V."/>
            <person name="Chan A.P."/>
            <person name="Thibaud-Nissen F."/>
            <person name="Schobel S."/>
            <person name="Town C.D."/>
        </authorList>
    </citation>
    <scope>GENOME REANNOTATION</scope>
    <source>
        <strain>cv. Columbia</strain>
    </source>
</reference>
<reference key="3">
    <citation type="journal article" date="2003" name="Science">
        <title>Empirical analysis of transcriptional activity in the Arabidopsis genome.</title>
        <authorList>
            <person name="Yamada K."/>
            <person name="Lim J."/>
            <person name="Dale J.M."/>
            <person name="Chen H."/>
            <person name="Shinn P."/>
            <person name="Palm C.J."/>
            <person name="Southwick A.M."/>
            <person name="Wu H.C."/>
            <person name="Kim C.J."/>
            <person name="Nguyen M."/>
            <person name="Pham P.K."/>
            <person name="Cheuk R.F."/>
            <person name="Karlin-Newmann G."/>
            <person name="Liu S.X."/>
            <person name="Lam B."/>
            <person name="Sakano H."/>
            <person name="Wu T."/>
            <person name="Yu G."/>
            <person name="Miranda M."/>
            <person name="Quach H.L."/>
            <person name="Tripp M."/>
            <person name="Chang C.H."/>
            <person name="Lee J.M."/>
            <person name="Toriumi M.J."/>
            <person name="Chan M.M."/>
            <person name="Tang C.C."/>
            <person name="Onodera C.S."/>
            <person name="Deng J.M."/>
            <person name="Akiyama K."/>
            <person name="Ansari Y."/>
            <person name="Arakawa T."/>
            <person name="Banh J."/>
            <person name="Banno F."/>
            <person name="Bowser L."/>
            <person name="Brooks S.Y."/>
            <person name="Carninci P."/>
            <person name="Chao Q."/>
            <person name="Choy N."/>
            <person name="Enju A."/>
            <person name="Goldsmith A.D."/>
            <person name="Gurjal M."/>
            <person name="Hansen N.F."/>
            <person name="Hayashizaki Y."/>
            <person name="Johnson-Hopson C."/>
            <person name="Hsuan V.W."/>
            <person name="Iida K."/>
            <person name="Karnes M."/>
            <person name="Khan S."/>
            <person name="Koesema E."/>
            <person name="Ishida J."/>
            <person name="Jiang P.X."/>
            <person name="Jones T."/>
            <person name="Kawai J."/>
            <person name="Kamiya A."/>
            <person name="Meyers C."/>
            <person name="Nakajima M."/>
            <person name="Narusaka M."/>
            <person name="Seki M."/>
            <person name="Sakurai T."/>
            <person name="Satou M."/>
            <person name="Tamse R."/>
            <person name="Vaysberg M."/>
            <person name="Wallender E.K."/>
            <person name="Wong C."/>
            <person name="Yamamura Y."/>
            <person name="Yuan S."/>
            <person name="Shinozaki K."/>
            <person name="Davis R.W."/>
            <person name="Theologis A."/>
            <person name="Ecker J.R."/>
        </authorList>
    </citation>
    <scope>NUCLEOTIDE SEQUENCE [LARGE SCALE MRNA]</scope>
    <source>
        <strain>cv. Columbia</strain>
    </source>
</reference>
<reference key="4">
    <citation type="journal article" date="2009" name="DNA Res.">
        <title>Analysis of multiple occurrences of alternative splicing events in Arabidopsis thaliana using novel sequenced full-length cDNAs.</title>
        <authorList>
            <person name="Iida K."/>
            <person name="Fukami-Kobayashi K."/>
            <person name="Toyoda A."/>
            <person name="Sakaki Y."/>
            <person name="Kobayashi M."/>
            <person name="Seki M."/>
            <person name="Shinozaki K."/>
        </authorList>
    </citation>
    <scope>NUCLEOTIDE SEQUENCE [LARGE SCALE MRNA]</scope>
    <source>
        <strain>cv. Columbia</strain>
        <tissue>Flower</tissue>
        <tissue>Silique</tissue>
    </source>
</reference>
<reference key="5">
    <citation type="journal article" date="2006" name="Plant Cell">
        <title>pTAC2, -6, and -12 are components of the transcriptionally active plastid chromosome that are required for plastid gene expression.</title>
        <authorList>
            <person name="Pfalz J."/>
            <person name="Liere K."/>
            <person name="Kandlbinder A."/>
            <person name="Dietz K.-J."/>
            <person name="Oelmueller R."/>
        </authorList>
    </citation>
    <scope>FUNCTION</scope>
    <scope>DISRUPTION PHENOTYPE</scope>
    <scope>TISSUE SPECIFICITY</scope>
    <scope>SUBUNIT</scope>
    <scope>IDENTIFICATION BY MASS SPECTROMETRY</scope>
    <scope>SUBCELLULAR LOCATION</scope>
    <scope>GENE FAMILY</scope>
    <scope>NOMENCLATURE</scope>
    <source>
        <strain>cv. Columbia</strain>
    </source>
</reference>
<reference key="6">
    <citation type="journal article" date="2011" name="Plant Physiol.">
        <title>Identification of nuclear genes encoding chloroplast-localized proteins required for embryo development in Arabidopsis.</title>
        <authorList>
            <person name="Bryant N."/>
            <person name="Lloyd J."/>
            <person name="Sweeney C."/>
            <person name="Myouga F."/>
            <person name="Meinke D."/>
        </authorList>
    </citation>
    <scope>IDENTIFICATION</scope>
</reference>
<reference key="7">
    <citation type="journal article" date="2014" name="Plant Cell Physiol.">
        <title>RARGE II: an integrated phenotype database of Arabidopsis mutant traits using a controlled vocabulary.</title>
        <authorList>
            <person name="Akiyama K."/>
            <person name="Kurotani A."/>
            <person name="Iida K."/>
            <person name="Kuromori T."/>
            <person name="Shinozaki K."/>
            <person name="Sakurai T."/>
        </authorList>
    </citation>
    <scope>FUNCTION</scope>
    <scope>DISRUPTION PHENOTYPE</scope>
</reference>
<reference key="8">
    <citation type="journal article" date="2019" name="Mol. Plant">
        <title>mTERF5 acts as a transcriptional pausing factor to positively regulate transcription of chloroplast psbEFLJ.</title>
        <authorList>
            <person name="Ding S."/>
            <person name="Zhang Y."/>
            <person name="Hu Z."/>
            <person name="Huang X."/>
            <person name="Zhang B."/>
            <person name="Lu Q."/>
            <person name="Wen X."/>
            <person name="Wang Y."/>
            <person name="Lu C."/>
        </authorList>
    </citation>
    <scope>FUNCTION</scope>
    <scope>DISRUPTION PHENOTYPE</scope>
    <scope>SUBCELLULAR LOCATION</scope>
    <scope>INTERACTION WITH MTERF5</scope>
    <source>
        <strain>cv. Columbia</strain>
    </source>
</reference>
<reference key="9">
    <citation type="journal article" date="2020" name="Biomolecules">
        <title>Cytokinin-regulated expression of Arabidopsis thaliana PAP genes and its implication for the expression of chloroplast-encoded genes.</title>
        <authorList>
            <person name="Andreeva A.A."/>
            <person name="Vankova R."/>
            <person name="Bychkov I.A."/>
            <person name="Kudryakova N.V."/>
            <person name="Danilova M.N."/>
            <person name="Lacek J."/>
            <person name="Pojidaeva E.S."/>
            <person name="Kusnetsov V.V."/>
        </authorList>
    </citation>
    <scope>INDUCTION BY CYTOKININ</scope>
    <source>
        <strain>cv. Columbia</strain>
    </source>
</reference>
<reference key="10">
    <citation type="journal article" date="2020" name="EMBO J.">
        <title>Nucleo-plastidic PAP8/pTAC6 couples chloroplast formation with photomorphogenesis.</title>
        <authorList>
            <person name="Liebers M."/>
            <person name="Gillet F.-X."/>
            <person name="Israel A."/>
            <person name="Pounot K."/>
            <person name="Chambon L."/>
            <person name="Chieb M."/>
            <person name="Chevalier F."/>
            <person name="Ruedas R."/>
            <person name="Favier A."/>
            <person name="Gans P."/>
            <person name="Boeri Erba E."/>
            <person name="Cobessi D."/>
            <person name="Pfannschmidt T."/>
            <person name="Blanvillain R."/>
        </authorList>
    </citation>
    <scope>FUNCTION</scope>
    <scope>DISRUPTION PHENOTYPE</scope>
    <scope>MUTAGENESIS OF 265-GLY--ILE-288</scope>
    <scope>SUBCELLULAR LOCATION</scope>
    <scope>INDUCTION BY LIGHT</scope>
    <scope>INTERACTION WITH PTAC12/HMR/PAP5</scope>
    <source>
        <strain>cv. Columbia</strain>
    </source>
</reference>
<reference key="11">
    <citation type="journal article" date="2022" name="Int. J. Mol. Sci.">
        <title>PAP8/pTAC6 is part of a nuclear protein complex and displays RNA recognition motifs of viral origin.</title>
        <authorList>
            <person name="Chambon L."/>
            <person name="Gillet F.-X."/>
            <person name="Chieb M."/>
            <person name="Cobessi D."/>
            <person name="Pfannschmidt T."/>
            <person name="Blanvillain R."/>
        </authorList>
    </citation>
    <scope>FUNCTION</scope>
    <scope>DISRUPTION PHENOTYPE</scope>
    <scope>MUTAGENESIS OF 1-MET--ASP-59 AND 267-ARG--LYS-272</scope>
    <scope>SUBUNIT</scope>
    <scope>SUBCELLULAR LOCATION</scope>
    <source>
        <strain>cv. Columbia</strain>
    </source>
</reference>
<comment type="function">
    <text evidence="2 3 4 5 7">Essential protein involved in plastid gene expression and in chloroplast biogenesis (PubMed:16326926, PubMed:31128276, PubMed:33001465, PubMed:35328480). Links photomorphogenesis and chloroplast biogenesis through its dual localization; required for the formation of late photobodies in the nucleus, as well as for phytochrome B-mediated signaling cascade and subsequent reshaping of the plastid-encoded RNA polymerase (PEP) activity (PubMed:33001465). Binds RNA via specific recognition motifs of viral origin (PubMed:35328480). Recruited by MTERF5 to the transcriptionally paused region of psbEFLJ (PubMed:31128276). Promotes leaf greening (PubMed:24272250).</text>
</comment>
<comment type="subunit">
    <text evidence="2 4 5 7">Subunit of the plastid-encoded RNA polymerase (PEP) complex (PubMed:16326926, PubMed:31128276, PubMed:35328480). Component of a large nuclear subcomplex that may include other PEP subunits (e.g. PTAC12/HMR/PAP5, PTAC14/PAP7 and PTAC7/PAP12) (PubMed:35328480). Binds directly to PTAC12/HMR/PAP5 in the nucleus (PubMed:33001465). Interacts with MTERF5 (PubMed:31128276).</text>
</comment>
<comment type="interaction">
    <interactant intactId="EBI-7890412">
        <id>Q9XI19</id>
    </interactant>
    <interactant intactId="EBI-25506855">
        <id>O23160</id>
        <label>MYB73</label>
    </interactant>
    <organismsDiffer>false</organismsDiffer>
    <experiments>3</experiments>
</comment>
<comment type="interaction">
    <interactant intactId="EBI-7890412">
        <id>Q9XI19</id>
    </interactant>
    <interactant intactId="EBI-2349513">
        <id>Q84MC7</id>
        <label>PYL9</label>
    </interactant>
    <organismsDiffer>false</organismsDiffer>
    <experiments>3</experiments>
</comment>
<comment type="interaction">
    <interactant intactId="EBI-7890412">
        <id>Q9XI19</id>
    </interactant>
    <interactant intactId="EBI-4426557">
        <id>Q84MB2</id>
        <label>TIFY8</label>
    </interactant>
    <organismsDiffer>false</organismsDiffer>
    <experiments>3</experiments>
</comment>
<comment type="interaction">
    <interactant intactId="EBI-7890412">
        <id>Q9XI19</id>
    </interactant>
    <interactant intactId="EBI-15193683">
        <id>Q5CCK4</id>
        <label>VAL2</label>
    </interactant>
    <organismsDiffer>false</organismsDiffer>
    <experiments>3</experiments>
</comment>
<comment type="subcellular location">
    <subcellularLocation>
        <location evidence="5 7 10 11">Plastid</location>
        <location evidence="5 7 10 11">Chloroplast</location>
    </subcellularLocation>
    <subcellularLocation>
        <location evidence="7">Plastid</location>
        <location evidence="7">Chloroplast thylakoid</location>
    </subcellularLocation>
    <subcellularLocation>
        <location evidence="5 7">Nucleus</location>
    </subcellularLocation>
    <subcellularLocation>
        <location evidence="7">Nucleus</location>
        <location evidence="7">Nucleoplasm</location>
    </subcellularLocation>
    <text evidence="5 7">Translocates to the chloroplast via its transit peptide and then take part of the plastid-encoded RNA polymerase (PEP) complex (PubMed:33001465). When in the nucleus, can bind to PTAC12/HMR/PAP5 (PubMed:33001465). Both localization are observed in the dark or under white light, mainly present in the nucleus of etiolated seedlings while enriched in chloroplast after light exposure (PubMed:33001465, PubMed:35328480).</text>
</comment>
<comment type="tissue specificity">
    <text evidence="2">Mostly expressed in rosette leaves, stems and flowers, and, to a lower extent, in roots and cauline leaves.</text>
</comment>
<comment type="induction">
    <text evidence="5 6">Induced by cytokinin (e.g. trans-zeatin) (PubMed:33322466). Probably regulated by HY5 in response to light (PubMed:33001465).</text>
</comment>
<comment type="disruption phenotype">
    <text evidence="2 3 4 5 7">Lethal without exogenous carbon sources (PubMed:16326926). Reduced expression of plastid-encoded genes with plastid-encoded multimeric promoters (PEP) (PubMed:16326926, PubMed:31128276). Strongly reduced presence of both plastid- and nuclear-encoded soluble polypeptides and polypeptides associated with the thylakoid membrane in chloroplasts (PubMed:16326926). Albino plants unable to produce primary leaves white cotyledons that fails to accumulate chlorophyll (Chl) even in low light, thus leading to high nonphotochemical quenching (NPQ) (PubMed:16326926, PubMed:24272250, PubMed:33001465, PubMed:35328480). This albino phenotype is associated with an altered phytochrome-mediated signaling, a disrupted degradation of chloroplast development repressors PIF1 and PIF3, destabilized HY5 and impaired expression of the photomorphogenesis regulator GLK1 (PubMed:33001465). Abnormal chloroplasts which fail to contain grana thylakoids that are replaced by oval-shaped vesicles surrounded by plastoglobuli (PubMed:16326926). Starch accumulates only in old leaves (PubMed:16326926).</text>
</comment>
<proteinExistence type="evidence at protein level"/>
<gene>
    <name evidence="8" type="primary">PTAC6</name>
    <name evidence="9" type="synonym">PAP8</name>
    <name evidence="14" type="ordered locus">At1g21600</name>
    <name evidence="15" type="ORF">F8K7.1</name>
</gene>